<evidence type="ECO:0000255" key="1">
    <source>
        <dbReference type="HAMAP-Rule" id="MF_01849"/>
    </source>
</evidence>
<evidence type="ECO:0000255" key="2">
    <source>
        <dbReference type="PROSITE-ProRule" id="PRU01266"/>
    </source>
</evidence>
<sequence>MPKPGELTFVAPRGAKKPPRHIADLTPAERKEAVAATGEKPFRAQQLSQHYFARYAHDPAEWTNIPAGSREKLAEALFPDLMSVMRHISCDDDTTRKTLWKLHDGTLVESVLMRYPDRVTMCISSQAGCGMNCPFCATGQAGLDRNLSTAEIVHQIVDGMRALRDGEVPGGPARLSNIVFMGMGEPLANYNRVVGAIRRLTDPEPDGLGLSQRGITVSTVGLVPAMLRFADEGFKCRLAVSLHAPDDELRDTLVPVNTRWNVREVLDAAWEYADKSGRRISIEYALIRDINDQAWRGDRLGRLLKGKRVHVNLIPLNPTPGSKWTASRPEDEKAFVEAVAAHGVPVTVRDTRGQEIDGACGQLAAAER</sequence>
<dbReference type="EC" id="2.1.1.192" evidence="1"/>
<dbReference type="EMBL" id="AP009493">
    <property type="protein sequence ID" value="BAG18687.1"/>
    <property type="molecule type" value="Genomic_DNA"/>
</dbReference>
<dbReference type="RefSeq" id="WP_012378826.1">
    <property type="nucleotide sequence ID" value="NC_010572.1"/>
</dbReference>
<dbReference type="SMR" id="B1VYT2"/>
<dbReference type="KEGG" id="sgr:SGR_1858"/>
<dbReference type="PATRIC" id="fig|455632.4.peg.1891"/>
<dbReference type="eggNOG" id="COG0820">
    <property type="taxonomic scope" value="Bacteria"/>
</dbReference>
<dbReference type="HOGENOM" id="CLU_029101_0_2_11"/>
<dbReference type="Proteomes" id="UP000001685">
    <property type="component" value="Chromosome"/>
</dbReference>
<dbReference type="GO" id="GO:0005737">
    <property type="term" value="C:cytoplasm"/>
    <property type="evidence" value="ECO:0007669"/>
    <property type="project" value="UniProtKB-SubCell"/>
</dbReference>
<dbReference type="GO" id="GO:0051539">
    <property type="term" value="F:4 iron, 4 sulfur cluster binding"/>
    <property type="evidence" value="ECO:0007669"/>
    <property type="project" value="UniProtKB-UniRule"/>
</dbReference>
<dbReference type="GO" id="GO:0046872">
    <property type="term" value="F:metal ion binding"/>
    <property type="evidence" value="ECO:0007669"/>
    <property type="project" value="UniProtKB-KW"/>
</dbReference>
<dbReference type="GO" id="GO:0070040">
    <property type="term" value="F:rRNA (adenine(2503)-C2-)-methyltransferase activity"/>
    <property type="evidence" value="ECO:0007669"/>
    <property type="project" value="UniProtKB-UniRule"/>
</dbReference>
<dbReference type="GO" id="GO:0019843">
    <property type="term" value="F:rRNA binding"/>
    <property type="evidence" value="ECO:0007669"/>
    <property type="project" value="UniProtKB-UniRule"/>
</dbReference>
<dbReference type="GO" id="GO:0002935">
    <property type="term" value="F:tRNA (adenine(37)-C2)-methyltransferase activity"/>
    <property type="evidence" value="ECO:0007669"/>
    <property type="project" value="UniProtKB-UniRule"/>
</dbReference>
<dbReference type="GO" id="GO:0000049">
    <property type="term" value="F:tRNA binding"/>
    <property type="evidence" value="ECO:0007669"/>
    <property type="project" value="UniProtKB-UniRule"/>
</dbReference>
<dbReference type="GO" id="GO:0070475">
    <property type="term" value="P:rRNA base methylation"/>
    <property type="evidence" value="ECO:0007669"/>
    <property type="project" value="UniProtKB-UniRule"/>
</dbReference>
<dbReference type="GO" id="GO:0030488">
    <property type="term" value="P:tRNA methylation"/>
    <property type="evidence" value="ECO:0007669"/>
    <property type="project" value="UniProtKB-UniRule"/>
</dbReference>
<dbReference type="CDD" id="cd01335">
    <property type="entry name" value="Radical_SAM"/>
    <property type="match status" value="1"/>
</dbReference>
<dbReference type="FunFam" id="3.20.20.70:FF:000014">
    <property type="entry name" value="Probable dual-specificity RNA methyltransferase RlmN"/>
    <property type="match status" value="1"/>
</dbReference>
<dbReference type="Gene3D" id="1.10.150.530">
    <property type="match status" value="1"/>
</dbReference>
<dbReference type="Gene3D" id="3.20.20.70">
    <property type="entry name" value="Aldolase class I"/>
    <property type="match status" value="1"/>
</dbReference>
<dbReference type="HAMAP" id="MF_01849">
    <property type="entry name" value="RNA_methyltr_RlmN"/>
    <property type="match status" value="1"/>
</dbReference>
<dbReference type="InterPro" id="IPR013785">
    <property type="entry name" value="Aldolase_TIM"/>
</dbReference>
<dbReference type="InterPro" id="IPR040072">
    <property type="entry name" value="Methyltransferase_A"/>
</dbReference>
<dbReference type="InterPro" id="IPR048641">
    <property type="entry name" value="RlmN_N"/>
</dbReference>
<dbReference type="InterPro" id="IPR027492">
    <property type="entry name" value="RNA_MTrfase_RlmN"/>
</dbReference>
<dbReference type="InterPro" id="IPR004383">
    <property type="entry name" value="rRNA_lsu_MTrfase_RlmN/Cfr"/>
</dbReference>
<dbReference type="InterPro" id="IPR007197">
    <property type="entry name" value="rSAM"/>
</dbReference>
<dbReference type="NCBIfam" id="TIGR00048">
    <property type="entry name" value="rRNA_mod_RlmN"/>
    <property type="match status" value="1"/>
</dbReference>
<dbReference type="PANTHER" id="PTHR30544">
    <property type="entry name" value="23S RRNA METHYLTRANSFERASE"/>
    <property type="match status" value="1"/>
</dbReference>
<dbReference type="PANTHER" id="PTHR30544:SF5">
    <property type="entry name" value="RADICAL SAM CORE DOMAIN-CONTAINING PROTEIN"/>
    <property type="match status" value="1"/>
</dbReference>
<dbReference type="Pfam" id="PF04055">
    <property type="entry name" value="Radical_SAM"/>
    <property type="match status" value="1"/>
</dbReference>
<dbReference type="Pfam" id="PF21016">
    <property type="entry name" value="RlmN_N"/>
    <property type="match status" value="1"/>
</dbReference>
<dbReference type="PIRSF" id="PIRSF006004">
    <property type="entry name" value="CHP00048"/>
    <property type="match status" value="1"/>
</dbReference>
<dbReference type="SFLD" id="SFLDF00275">
    <property type="entry name" value="adenosine_C2_methyltransferase"/>
    <property type="match status" value="1"/>
</dbReference>
<dbReference type="SFLD" id="SFLDG01062">
    <property type="entry name" value="methyltransferase_(Class_A)"/>
    <property type="match status" value="1"/>
</dbReference>
<dbReference type="SUPFAM" id="SSF102114">
    <property type="entry name" value="Radical SAM enzymes"/>
    <property type="match status" value="1"/>
</dbReference>
<dbReference type="PROSITE" id="PS51918">
    <property type="entry name" value="RADICAL_SAM"/>
    <property type="match status" value="1"/>
</dbReference>
<keyword id="KW-0004">4Fe-4S</keyword>
<keyword id="KW-0963">Cytoplasm</keyword>
<keyword id="KW-1015">Disulfide bond</keyword>
<keyword id="KW-0408">Iron</keyword>
<keyword id="KW-0411">Iron-sulfur</keyword>
<keyword id="KW-0479">Metal-binding</keyword>
<keyword id="KW-0489">Methyltransferase</keyword>
<keyword id="KW-0698">rRNA processing</keyword>
<keyword id="KW-0949">S-adenosyl-L-methionine</keyword>
<keyword id="KW-0808">Transferase</keyword>
<keyword id="KW-0819">tRNA processing</keyword>
<proteinExistence type="inferred from homology"/>
<accession>B1VYT2</accession>
<feature type="chain" id="PRO_0000350475" description="Probable dual-specificity RNA methyltransferase RlmN">
    <location>
        <begin position="1"/>
        <end position="368"/>
    </location>
</feature>
<feature type="domain" description="Radical SAM core" evidence="2">
    <location>
        <begin position="115"/>
        <end position="355"/>
    </location>
</feature>
<feature type="active site" description="Proton acceptor" evidence="1">
    <location>
        <position position="109"/>
    </location>
</feature>
<feature type="active site" description="S-methylcysteine intermediate" evidence="1">
    <location>
        <position position="360"/>
    </location>
</feature>
<feature type="binding site" evidence="1">
    <location>
        <position position="129"/>
    </location>
    <ligand>
        <name>[4Fe-4S] cluster</name>
        <dbReference type="ChEBI" id="CHEBI:49883"/>
        <note>4Fe-4S-S-AdoMet</note>
    </ligand>
</feature>
<feature type="binding site" evidence="1">
    <location>
        <position position="133"/>
    </location>
    <ligand>
        <name>[4Fe-4S] cluster</name>
        <dbReference type="ChEBI" id="CHEBI:49883"/>
        <note>4Fe-4S-S-AdoMet</note>
    </ligand>
</feature>
<feature type="binding site" evidence="1">
    <location>
        <position position="136"/>
    </location>
    <ligand>
        <name>[4Fe-4S] cluster</name>
        <dbReference type="ChEBI" id="CHEBI:49883"/>
        <note>4Fe-4S-S-AdoMet</note>
    </ligand>
</feature>
<feature type="binding site" evidence="1">
    <location>
        <begin position="184"/>
        <end position="185"/>
    </location>
    <ligand>
        <name>S-adenosyl-L-methionine</name>
        <dbReference type="ChEBI" id="CHEBI:59789"/>
    </ligand>
</feature>
<feature type="binding site" evidence="1">
    <location>
        <position position="218"/>
    </location>
    <ligand>
        <name>S-adenosyl-L-methionine</name>
        <dbReference type="ChEBI" id="CHEBI:59789"/>
    </ligand>
</feature>
<feature type="binding site" evidence="1">
    <location>
        <begin position="241"/>
        <end position="243"/>
    </location>
    <ligand>
        <name>S-adenosyl-L-methionine</name>
        <dbReference type="ChEBI" id="CHEBI:59789"/>
    </ligand>
</feature>
<feature type="binding site" evidence="1">
    <location>
        <position position="317"/>
    </location>
    <ligand>
        <name>S-adenosyl-L-methionine</name>
        <dbReference type="ChEBI" id="CHEBI:59789"/>
    </ligand>
</feature>
<feature type="disulfide bond" description="(transient)" evidence="1">
    <location>
        <begin position="122"/>
        <end position="360"/>
    </location>
</feature>
<reference key="1">
    <citation type="journal article" date="2008" name="J. Bacteriol.">
        <title>Genome sequence of the streptomycin-producing microorganism Streptomyces griseus IFO 13350.</title>
        <authorList>
            <person name="Ohnishi Y."/>
            <person name="Ishikawa J."/>
            <person name="Hara H."/>
            <person name="Suzuki H."/>
            <person name="Ikenoya M."/>
            <person name="Ikeda H."/>
            <person name="Yamashita A."/>
            <person name="Hattori M."/>
            <person name="Horinouchi S."/>
        </authorList>
    </citation>
    <scope>NUCLEOTIDE SEQUENCE [LARGE SCALE GENOMIC DNA]</scope>
    <source>
        <strain>JCM 4626 / CBS 651.72 / NBRC 13350 / KCC S-0626 / ISP 5235</strain>
    </source>
</reference>
<gene>
    <name evidence="1" type="primary">rlmN</name>
    <name type="ordered locus">SGR_1858</name>
</gene>
<comment type="function">
    <text evidence="1">Specifically methylates position 2 of adenine 2503 in 23S rRNA and position 2 of adenine 37 in tRNAs.</text>
</comment>
<comment type="catalytic activity">
    <reaction evidence="1">
        <text>adenosine(2503) in 23S rRNA + 2 reduced [2Fe-2S]-[ferredoxin] + 2 S-adenosyl-L-methionine = 2-methyladenosine(2503) in 23S rRNA + 5'-deoxyadenosine + L-methionine + 2 oxidized [2Fe-2S]-[ferredoxin] + S-adenosyl-L-homocysteine</text>
        <dbReference type="Rhea" id="RHEA:42916"/>
        <dbReference type="Rhea" id="RHEA-COMP:10000"/>
        <dbReference type="Rhea" id="RHEA-COMP:10001"/>
        <dbReference type="Rhea" id="RHEA-COMP:10152"/>
        <dbReference type="Rhea" id="RHEA-COMP:10282"/>
        <dbReference type="ChEBI" id="CHEBI:17319"/>
        <dbReference type="ChEBI" id="CHEBI:33737"/>
        <dbReference type="ChEBI" id="CHEBI:33738"/>
        <dbReference type="ChEBI" id="CHEBI:57844"/>
        <dbReference type="ChEBI" id="CHEBI:57856"/>
        <dbReference type="ChEBI" id="CHEBI:59789"/>
        <dbReference type="ChEBI" id="CHEBI:74411"/>
        <dbReference type="ChEBI" id="CHEBI:74497"/>
        <dbReference type="EC" id="2.1.1.192"/>
    </reaction>
</comment>
<comment type="catalytic activity">
    <reaction evidence="1">
        <text>adenosine(37) in tRNA + 2 reduced [2Fe-2S]-[ferredoxin] + 2 S-adenosyl-L-methionine = 2-methyladenosine(37) in tRNA + 5'-deoxyadenosine + L-methionine + 2 oxidized [2Fe-2S]-[ferredoxin] + S-adenosyl-L-homocysteine</text>
        <dbReference type="Rhea" id="RHEA:43332"/>
        <dbReference type="Rhea" id="RHEA-COMP:10000"/>
        <dbReference type="Rhea" id="RHEA-COMP:10001"/>
        <dbReference type="Rhea" id="RHEA-COMP:10162"/>
        <dbReference type="Rhea" id="RHEA-COMP:10485"/>
        <dbReference type="ChEBI" id="CHEBI:17319"/>
        <dbReference type="ChEBI" id="CHEBI:33737"/>
        <dbReference type="ChEBI" id="CHEBI:33738"/>
        <dbReference type="ChEBI" id="CHEBI:57844"/>
        <dbReference type="ChEBI" id="CHEBI:57856"/>
        <dbReference type="ChEBI" id="CHEBI:59789"/>
        <dbReference type="ChEBI" id="CHEBI:74411"/>
        <dbReference type="ChEBI" id="CHEBI:74497"/>
        <dbReference type="EC" id="2.1.1.192"/>
    </reaction>
</comment>
<comment type="cofactor">
    <cofactor evidence="1">
        <name>[4Fe-4S] cluster</name>
        <dbReference type="ChEBI" id="CHEBI:49883"/>
    </cofactor>
    <text evidence="1">Binds 1 [4Fe-4S] cluster. The cluster is coordinated with 3 cysteines and an exchangeable S-adenosyl-L-methionine.</text>
</comment>
<comment type="subcellular location">
    <subcellularLocation>
        <location evidence="1">Cytoplasm</location>
    </subcellularLocation>
</comment>
<comment type="miscellaneous">
    <text evidence="1">Reaction proceeds by a ping-pong mechanism involving intermediate methylation of a conserved cysteine residue.</text>
</comment>
<comment type="similarity">
    <text evidence="1">Belongs to the radical SAM superfamily. RlmN family.</text>
</comment>
<name>RLMN_STRGG</name>
<organism>
    <name type="scientific">Streptomyces griseus subsp. griseus (strain JCM 4626 / CBS 651.72 / NBRC 13350 / KCC S-0626 / ISP 5235)</name>
    <dbReference type="NCBI Taxonomy" id="455632"/>
    <lineage>
        <taxon>Bacteria</taxon>
        <taxon>Bacillati</taxon>
        <taxon>Actinomycetota</taxon>
        <taxon>Actinomycetes</taxon>
        <taxon>Kitasatosporales</taxon>
        <taxon>Streptomycetaceae</taxon>
        <taxon>Streptomyces</taxon>
    </lineage>
</organism>
<protein>
    <recommendedName>
        <fullName evidence="1">Probable dual-specificity RNA methyltransferase RlmN</fullName>
        <ecNumber evidence="1">2.1.1.192</ecNumber>
    </recommendedName>
    <alternativeName>
        <fullName evidence="1">23S rRNA (adenine(2503)-C(2))-methyltransferase</fullName>
    </alternativeName>
    <alternativeName>
        <fullName evidence="1">23S rRNA m2A2503 methyltransferase</fullName>
    </alternativeName>
    <alternativeName>
        <fullName evidence="1">Ribosomal RNA large subunit methyltransferase N</fullName>
    </alternativeName>
    <alternativeName>
        <fullName evidence="1">tRNA (adenine(37)-C(2))-methyltransferase</fullName>
    </alternativeName>
    <alternativeName>
        <fullName evidence="1">tRNA m2A37 methyltransferase</fullName>
    </alternativeName>
</protein>